<accession>B0SSF2</accession>
<organism>
    <name type="scientific">Leptospira biflexa serovar Patoc (strain Patoc 1 / ATCC 23582 / Paris)</name>
    <dbReference type="NCBI Taxonomy" id="456481"/>
    <lineage>
        <taxon>Bacteria</taxon>
        <taxon>Pseudomonadati</taxon>
        <taxon>Spirochaetota</taxon>
        <taxon>Spirochaetia</taxon>
        <taxon>Leptospirales</taxon>
        <taxon>Leptospiraceae</taxon>
        <taxon>Leptospira</taxon>
    </lineage>
</organism>
<name>RPOA_LEPBP</name>
<feature type="chain" id="PRO_1000091954" description="DNA-directed RNA polymerase subunit alpha">
    <location>
        <begin position="1"/>
        <end position="325"/>
    </location>
</feature>
<feature type="region of interest" description="Alpha N-terminal domain (alpha-NTD)" evidence="1">
    <location>
        <begin position="1"/>
        <end position="238"/>
    </location>
</feature>
<feature type="region of interest" description="Alpha C-terminal domain (alpha-CTD)" evidence="1">
    <location>
        <begin position="255"/>
        <end position="325"/>
    </location>
</feature>
<keyword id="KW-0240">DNA-directed RNA polymerase</keyword>
<keyword id="KW-0548">Nucleotidyltransferase</keyword>
<keyword id="KW-1185">Reference proteome</keyword>
<keyword id="KW-0804">Transcription</keyword>
<keyword id="KW-0808">Transferase</keyword>
<sequence length="325" mass="36600">MSPKNLLKGFKRPKKIEFTTDVNTPNYGKFVAEPFERGIGTTIGNSLRRTLMSSIEGAAISAIRIEGVSHEFSYIEGVAEDVTRIILNLKQVRIKYEPEDKEASKVIHLELKGAGYFRAADLAVDSSIEIMNPDLHIATLNEDANLIMDLEIQRGRGYVPAEDKKKDIEVLGTIPIDSIFSPIQKVLFEVSETRVAQRSDYEKLTMEVWTDGSVSPEDAVAQAAKILKDHLTVFINFEEEIEEEEEELDEADEKLKAALSKHVEELELSVRSTNVLRSLEIDFIGELVKRSEDEMTKSKHFSEQSLLELKAKLSSMGLSFGMRDF</sequence>
<dbReference type="EC" id="2.7.7.6" evidence="1"/>
<dbReference type="EMBL" id="CP000786">
    <property type="protein sequence ID" value="ABZ98042.1"/>
    <property type="molecule type" value="Genomic_DNA"/>
</dbReference>
<dbReference type="RefSeq" id="WP_012388920.1">
    <property type="nucleotide sequence ID" value="NC_010602.1"/>
</dbReference>
<dbReference type="SMR" id="B0SSF2"/>
<dbReference type="STRING" id="456481.LEPBI_I1939"/>
<dbReference type="KEGG" id="lbi:LEPBI_I1939"/>
<dbReference type="HOGENOM" id="CLU_053084_0_1_12"/>
<dbReference type="OrthoDB" id="9805706at2"/>
<dbReference type="BioCyc" id="LBIF456481:LEPBI_RS09580-MONOMER"/>
<dbReference type="Proteomes" id="UP000001847">
    <property type="component" value="Chromosome I"/>
</dbReference>
<dbReference type="GO" id="GO:0005737">
    <property type="term" value="C:cytoplasm"/>
    <property type="evidence" value="ECO:0007669"/>
    <property type="project" value="UniProtKB-ARBA"/>
</dbReference>
<dbReference type="GO" id="GO:0000428">
    <property type="term" value="C:DNA-directed RNA polymerase complex"/>
    <property type="evidence" value="ECO:0007669"/>
    <property type="project" value="UniProtKB-KW"/>
</dbReference>
<dbReference type="GO" id="GO:0003677">
    <property type="term" value="F:DNA binding"/>
    <property type="evidence" value="ECO:0007669"/>
    <property type="project" value="UniProtKB-UniRule"/>
</dbReference>
<dbReference type="GO" id="GO:0003899">
    <property type="term" value="F:DNA-directed RNA polymerase activity"/>
    <property type="evidence" value="ECO:0007669"/>
    <property type="project" value="UniProtKB-UniRule"/>
</dbReference>
<dbReference type="GO" id="GO:0046983">
    <property type="term" value="F:protein dimerization activity"/>
    <property type="evidence" value="ECO:0007669"/>
    <property type="project" value="InterPro"/>
</dbReference>
<dbReference type="GO" id="GO:0006351">
    <property type="term" value="P:DNA-templated transcription"/>
    <property type="evidence" value="ECO:0007669"/>
    <property type="project" value="UniProtKB-UniRule"/>
</dbReference>
<dbReference type="CDD" id="cd06928">
    <property type="entry name" value="RNAP_alpha_NTD"/>
    <property type="match status" value="1"/>
</dbReference>
<dbReference type="FunFam" id="2.170.120.12:FF:000001">
    <property type="entry name" value="DNA-directed RNA polymerase subunit alpha"/>
    <property type="match status" value="1"/>
</dbReference>
<dbReference type="Gene3D" id="1.10.150.20">
    <property type="entry name" value="5' to 3' exonuclease, C-terminal subdomain"/>
    <property type="match status" value="1"/>
</dbReference>
<dbReference type="Gene3D" id="2.170.120.12">
    <property type="entry name" value="DNA-directed RNA polymerase, insert domain"/>
    <property type="match status" value="1"/>
</dbReference>
<dbReference type="Gene3D" id="3.30.1360.10">
    <property type="entry name" value="RNA polymerase, RBP11-like subunit"/>
    <property type="match status" value="1"/>
</dbReference>
<dbReference type="HAMAP" id="MF_00059">
    <property type="entry name" value="RNApol_bact_RpoA"/>
    <property type="match status" value="1"/>
</dbReference>
<dbReference type="InterPro" id="IPR011262">
    <property type="entry name" value="DNA-dir_RNA_pol_insert"/>
</dbReference>
<dbReference type="InterPro" id="IPR011263">
    <property type="entry name" value="DNA-dir_RNA_pol_RpoA/D/Rpb3"/>
</dbReference>
<dbReference type="InterPro" id="IPR011773">
    <property type="entry name" value="DNA-dir_RpoA"/>
</dbReference>
<dbReference type="InterPro" id="IPR036603">
    <property type="entry name" value="RBP11-like"/>
</dbReference>
<dbReference type="InterPro" id="IPR011260">
    <property type="entry name" value="RNAP_asu_C"/>
</dbReference>
<dbReference type="InterPro" id="IPR036643">
    <property type="entry name" value="RNApol_insert_sf"/>
</dbReference>
<dbReference type="NCBIfam" id="NF003513">
    <property type="entry name" value="PRK05182.1-2"/>
    <property type="match status" value="1"/>
</dbReference>
<dbReference type="NCBIfam" id="NF003519">
    <property type="entry name" value="PRK05182.2-5"/>
    <property type="match status" value="1"/>
</dbReference>
<dbReference type="NCBIfam" id="TIGR02027">
    <property type="entry name" value="rpoA"/>
    <property type="match status" value="1"/>
</dbReference>
<dbReference type="Pfam" id="PF01000">
    <property type="entry name" value="RNA_pol_A_bac"/>
    <property type="match status" value="1"/>
</dbReference>
<dbReference type="Pfam" id="PF03118">
    <property type="entry name" value="RNA_pol_A_CTD"/>
    <property type="match status" value="1"/>
</dbReference>
<dbReference type="Pfam" id="PF01193">
    <property type="entry name" value="RNA_pol_L"/>
    <property type="match status" value="1"/>
</dbReference>
<dbReference type="SMART" id="SM00662">
    <property type="entry name" value="RPOLD"/>
    <property type="match status" value="1"/>
</dbReference>
<dbReference type="SUPFAM" id="SSF47789">
    <property type="entry name" value="C-terminal domain of RNA polymerase alpha subunit"/>
    <property type="match status" value="1"/>
</dbReference>
<dbReference type="SUPFAM" id="SSF56553">
    <property type="entry name" value="Insert subdomain of RNA polymerase alpha subunit"/>
    <property type="match status" value="1"/>
</dbReference>
<dbReference type="SUPFAM" id="SSF55257">
    <property type="entry name" value="RBP11-like subunits of RNA polymerase"/>
    <property type="match status" value="1"/>
</dbReference>
<comment type="function">
    <text evidence="1">DNA-dependent RNA polymerase catalyzes the transcription of DNA into RNA using the four ribonucleoside triphosphates as substrates.</text>
</comment>
<comment type="catalytic activity">
    <reaction evidence="1">
        <text>RNA(n) + a ribonucleoside 5'-triphosphate = RNA(n+1) + diphosphate</text>
        <dbReference type="Rhea" id="RHEA:21248"/>
        <dbReference type="Rhea" id="RHEA-COMP:14527"/>
        <dbReference type="Rhea" id="RHEA-COMP:17342"/>
        <dbReference type="ChEBI" id="CHEBI:33019"/>
        <dbReference type="ChEBI" id="CHEBI:61557"/>
        <dbReference type="ChEBI" id="CHEBI:140395"/>
        <dbReference type="EC" id="2.7.7.6"/>
    </reaction>
</comment>
<comment type="subunit">
    <text evidence="1">Homodimer. The RNAP catalytic core consists of 2 alpha, 1 beta, 1 beta' and 1 omega subunit. When a sigma factor is associated with the core the holoenzyme is formed, which can initiate transcription.</text>
</comment>
<comment type="domain">
    <text evidence="1">The N-terminal domain is essential for RNAP assembly and basal transcription, whereas the C-terminal domain is involved in interaction with transcriptional regulators and with upstream promoter elements.</text>
</comment>
<comment type="similarity">
    <text evidence="1">Belongs to the RNA polymerase alpha chain family.</text>
</comment>
<gene>
    <name evidence="1" type="primary">rpoA</name>
    <name type="ordered locus">LEPBI_I1939</name>
</gene>
<proteinExistence type="inferred from homology"/>
<protein>
    <recommendedName>
        <fullName evidence="1">DNA-directed RNA polymerase subunit alpha</fullName>
        <shortName evidence="1">RNAP subunit alpha</shortName>
        <ecNumber evidence="1">2.7.7.6</ecNumber>
    </recommendedName>
    <alternativeName>
        <fullName evidence="1">RNA polymerase subunit alpha</fullName>
    </alternativeName>
    <alternativeName>
        <fullName evidence="1">Transcriptase subunit alpha</fullName>
    </alternativeName>
</protein>
<evidence type="ECO:0000255" key="1">
    <source>
        <dbReference type="HAMAP-Rule" id="MF_00059"/>
    </source>
</evidence>
<reference key="1">
    <citation type="journal article" date="2008" name="PLoS ONE">
        <title>Genome sequence of the saprophyte Leptospira biflexa provides insights into the evolution of Leptospira and the pathogenesis of leptospirosis.</title>
        <authorList>
            <person name="Picardeau M."/>
            <person name="Bulach D.M."/>
            <person name="Bouchier C."/>
            <person name="Zuerner R.L."/>
            <person name="Zidane N."/>
            <person name="Wilson P.J."/>
            <person name="Creno S."/>
            <person name="Kuczek E.S."/>
            <person name="Bommezzadri S."/>
            <person name="Davis J.C."/>
            <person name="McGrath A."/>
            <person name="Johnson M.J."/>
            <person name="Boursaux-Eude C."/>
            <person name="Seemann T."/>
            <person name="Rouy Z."/>
            <person name="Coppel R.L."/>
            <person name="Rood J.I."/>
            <person name="Lajus A."/>
            <person name="Davies J.K."/>
            <person name="Medigue C."/>
            <person name="Adler B."/>
        </authorList>
    </citation>
    <scope>NUCLEOTIDE SEQUENCE [LARGE SCALE GENOMIC DNA]</scope>
    <source>
        <strain>Patoc 1 / ATCC 23582 / Paris</strain>
    </source>
</reference>